<proteinExistence type="inferred from homology"/>
<protein>
    <recommendedName>
        <fullName>Multidrug resistance efflux pump SepA</fullName>
    </recommendedName>
    <alternativeName>
        <fullName>Antiseptic resistance protein SepA</fullName>
    </alternativeName>
    <alternativeName>
        <fullName>Staphylococcal efflux pump A</fullName>
    </alternativeName>
</protein>
<sequence>MIVNYLKHKFYNLLTTMVVLFIFVLSGAIFLTFLGFGLYGLSRILIYFRLGDFTYNRSMYDNLLYYGSYIIFGYFIIFAVEHLMDYFRKMLPENAYFRGATFHLISYTVATTLFYFIIHLNYVYINIDFWVIMVIIGFLYVCKLQFYPESKNLNNRK</sequence>
<dbReference type="EMBL" id="BA000033">
    <property type="protein sequence ID" value="BAB95959.1"/>
    <property type="molecule type" value="Genomic_DNA"/>
</dbReference>
<dbReference type="RefSeq" id="WP_001793373.1">
    <property type="nucleotide sequence ID" value="NC_003923.1"/>
</dbReference>
<dbReference type="KEGG" id="sam:MW2094"/>
<dbReference type="HOGENOM" id="CLU_151983_0_0_9"/>
<dbReference type="GO" id="GO:0005886">
    <property type="term" value="C:plasma membrane"/>
    <property type="evidence" value="ECO:0007669"/>
    <property type="project" value="UniProtKB-SubCell"/>
</dbReference>
<dbReference type="InterPro" id="IPR031396">
    <property type="entry name" value="SepA"/>
</dbReference>
<dbReference type="Pfam" id="PF17080">
    <property type="entry name" value="SepA"/>
    <property type="match status" value="1"/>
</dbReference>
<organism>
    <name type="scientific">Staphylococcus aureus (strain MW2)</name>
    <dbReference type="NCBI Taxonomy" id="196620"/>
    <lineage>
        <taxon>Bacteria</taxon>
        <taxon>Bacillati</taxon>
        <taxon>Bacillota</taxon>
        <taxon>Bacilli</taxon>
        <taxon>Bacillales</taxon>
        <taxon>Staphylococcaceae</taxon>
        <taxon>Staphylococcus</taxon>
    </lineage>
</organism>
<accession>Q8NVE1</accession>
<gene>
    <name type="primary">sepA</name>
    <name type="ordered locus">MW2094</name>
</gene>
<name>MDEP_STAAW</name>
<feature type="chain" id="PRO_0000351489" description="Multidrug resistance efflux pump SepA">
    <location>
        <begin position="1"/>
        <end position="157"/>
    </location>
</feature>
<feature type="transmembrane region" description="Helical" evidence="2">
    <location>
        <begin position="18"/>
        <end position="38"/>
    </location>
</feature>
<feature type="transmembrane region" description="Helical" evidence="2">
    <location>
        <begin position="63"/>
        <end position="83"/>
    </location>
</feature>
<feature type="transmembrane region" description="Helical" evidence="2">
    <location>
        <begin position="100"/>
        <end position="120"/>
    </location>
</feature>
<feature type="transmembrane region" description="Helical" evidence="2">
    <location>
        <begin position="122"/>
        <end position="142"/>
    </location>
</feature>
<evidence type="ECO:0000250" key="1"/>
<evidence type="ECO:0000255" key="2"/>
<evidence type="ECO:0000305" key="3"/>
<comment type="function">
    <text evidence="1">Involved in multidrug efflux.</text>
</comment>
<comment type="subcellular location">
    <subcellularLocation>
        <location evidence="3">Cell membrane</location>
        <topology evidence="3">Multi-pass membrane protein</topology>
    </subcellularLocation>
</comment>
<comment type="similarity">
    <text evidence="3">Belongs to the multidrug resistance efflux pump SepA family.</text>
</comment>
<reference key="1">
    <citation type="journal article" date="2002" name="Lancet">
        <title>Genome and virulence determinants of high virulence community-acquired MRSA.</title>
        <authorList>
            <person name="Baba T."/>
            <person name="Takeuchi F."/>
            <person name="Kuroda M."/>
            <person name="Yuzawa H."/>
            <person name="Aoki K."/>
            <person name="Oguchi A."/>
            <person name="Nagai Y."/>
            <person name="Iwama N."/>
            <person name="Asano K."/>
            <person name="Naimi T."/>
            <person name="Kuroda H."/>
            <person name="Cui L."/>
            <person name="Yamamoto K."/>
            <person name="Hiramatsu K."/>
        </authorList>
    </citation>
    <scope>NUCLEOTIDE SEQUENCE [LARGE SCALE GENOMIC DNA]</scope>
    <source>
        <strain>MW2</strain>
    </source>
</reference>
<keyword id="KW-1003">Cell membrane</keyword>
<keyword id="KW-0472">Membrane</keyword>
<keyword id="KW-0812">Transmembrane</keyword>
<keyword id="KW-1133">Transmembrane helix</keyword>
<keyword id="KW-0813">Transport</keyword>